<keyword id="KW-1185">Reference proteome</keyword>
<keyword id="KW-0687">Ribonucleoprotein</keyword>
<keyword id="KW-0689">Ribosomal protein</keyword>
<keyword id="KW-0694">RNA-binding</keyword>
<keyword id="KW-0699">rRNA-binding</keyword>
<feature type="chain" id="PRO_0000229557" description="Small ribosomal subunit protein bS6">
    <location>
        <begin position="1"/>
        <end position="156"/>
    </location>
</feature>
<feature type="region of interest" description="Disordered" evidence="2">
    <location>
        <begin position="95"/>
        <end position="156"/>
    </location>
</feature>
<feature type="compositionally biased region" description="Basic and acidic residues" evidence="2">
    <location>
        <begin position="117"/>
        <end position="126"/>
    </location>
</feature>
<proteinExistence type="inferred from homology"/>
<dbReference type="EMBL" id="CP000127">
    <property type="protein sequence ID" value="ABA56750.1"/>
    <property type="molecule type" value="Genomic_DNA"/>
</dbReference>
<dbReference type="RefSeq" id="WP_002812824.1">
    <property type="nucleotide sequence ID" value="NC_007484.1"/>
</dbReference>
<dbReference type="SMR" id="Q3JEJ6"/>
<dbReference type="FunCoup" id="Q3JEJ6">
    <property type="interactions" value="580"/>
</dbReference>
<dbReference type="STRING" id="323261.Noc_0220"/>
<dbReference type="KEGG" id="noc:Noc_0220"/>
<dbReference type="eggNOG" id="COG0360">
    <property type="taxonomic scope" value="Bacteria"/>
</dbReference>
<dbReference type="HOGENOM" id="CLU_113441_6_0_6"/>
<dbReference type="InParanoid" id="Q3JEJ6"/>
<dbReference type="Proteomes" id="UP000006838">
    <property type="component" value="Chromosome"/>
</dbReference>
<dbReference type="GO" id="GO:0022627">
    <property type="term" value="C:cytosolic small ribosomal subunit"/>
    <property type="evidence" value="ECO:0007669"/>
    <property type="project" value="TreeGrafter"/>
</dbReference>
<dbReference type="GO" id="GO:0070181">
    <property type="term" value="F:small ribosomal subunit rRNA binding"/>
    <property type="evidence" value="ECO:0007669"/>
    <property type="project" value="TreeGrafter"/>
</dbReference>
<dbReference type="GO" id="GO:0003735">
    <property type="term" value="F:structural constituent of ribosome"/>
    <property type="evidence" value="ECO:0007669"/>
    <property type="project" value="InterPro"/>
</dbReference>
<dbReference type="GO" id="GO:0006412">
    <property type="term" value="P:translation"/>
    <property type="evidence" value="ECO:0007669"/>
    <property type="project" value="UniProtKB-UniRule"/>
</dbReference>
<dbReference type="CDD" id="cd00473">
    <property type="entry name" value="bS6"/>
    <property type="match status" value="1"/>
</dbReference>
<dbReference type="Gene3D" id="3.30.70.60">
    <property type="match status" value="1"/>
</dbReference>
<dbReference type="HAMAP" id="MF_00360">
    <property type="entry name" value="Ribosomal_bS6"/>
    <property type="match status" value="1"/>
</dbReference>
<dbReference type="InterPro" id="IPR000529">
    <property type="entry name" value="Ribosomal_bS6"/>
</dbReference>
<dbReference type="InterPro" id="IPR035980">
    <property type="entry name" value="Ribosomal_bS6_sf"/>
</dbReference>
<dbReference type="InterPro" id="IPR020814">
    <property type="entry name" value="Ribosomal_S6_plastid/chlpt"/>
</dbReference>
<dbReference type="InterPro" id="IPR014717">
    <property type="entry name" value="Transl_elong_EF1B/ribsomal_bS6"/>
</dbReference>
<dbReference type="NCBIfam" id="TIGR00166">
    <property type="entry name" value="S6"/>
    <property type="match status" value="1"/>
</dbReference>
<dbReference type="PANTHER" id="PTHR21011">
    <property type="entry name" value="MITOCHONDRIAL 28S RIBOSOMAL PROTEIN S6"/>
    <property type="match status" value="1"/>
</dbReference>
<dbReference type="PANTHER" id="PTHR21011:SF1">
    <property type="entry name" value="SMALL RIBOSOMAL SUBUNIT PROTEIN BS6M"/>
    <property type="match status" value="1"/>
</dbReference>
<dbReference type="Pfam" id="PF01250">
    <property type="entry name" value="Ribosomal_S6"/>
    <property type="match status" value="1"/>
</dbReference>
<dbReference type="SUPFAM" id="SSF54995">
    <property type="entry name" value="Ribosomal protein S6"/>
    <property type="match status" value="1"/>
</dbReference>
<organism>
    <name type="scientific">Nitrosococcus oceani (strain ATCC 19707 / BCRC 17464 / JCM 30415 / NCIMB 11848 / C-107)</name>
    <dbReference type="NCBI Taxonomy" id="323261"/>
    <lineage>
        <taxon>Bacteria</taxon>
        <taxon>Pseudomonadati</taxon>
        <taxon>Pseudomonadota</taxon>
        <taxon>Gammaproteobacteria</taxon>
        <taxon>Chromatiales</taxon>
        <taxon>Chromatiaceae</taxon>
        <taxon>Nitrosococcus</taxon>
    </lineage>
</organism>
<accession>Q3JEJ6</accession>
<evidence type="ECO:0000255" key="1">
    <source>
        <dbReference type="HAMAP-Rule" id="MF_00360"/>
    </source>
</evidence>
<evidence type="ECO:0000256" key="2">
    <source>
        <dbReference type="SAM" id="MobiDB-lite"/>
    </source>
</evidence>
<evidence type="ECO:0000305" key="3"/>
<gene>
    <name evidence="1" type="primary">rpsF</name>
    <name type="ordered locus">Noc_0220</name>
</gene>
<name>RS6_NITOC</name>
<reference key="1">
    <citation type="journal article" date="2006" name="Appl. Environ. Microbiol.">
        <title>Complete genome sequence of the marine, chemolithoautotrophic, ammonia-oxidizing bacterium Nitrosococcus oceani ATCC 19707.</title>
        <authorList>
            <person name="Klotz M.G."/>
            <person name="Arp D.J."/>
            <person name="Chain P.S.G."/>
            <person name="El-Sheikh A.F."/>
            <person name="Hauser L.J."/>
            <person name="Hommes N.G."/>
            <person name="Larimer F.W."/>
            <person name="Malfatti S.A."/>
            <person name="Norton J.M."/>
            <person name="Poret-Peterson A.T."/>
            <person name="Vergez L.M."/>
            <person name="Ward B.B."/>
        </authorList>
    </citation>
    <scope>NUCLEOTIDE SEQUENCE [LARGE SCALE GENOMIC DNA]</scope>
    <source>
        <strain>ATCC 19707 / BCRC 17464 / JCM 30415 / NCIMB 11848 / C-107</strain>
    </source>
</reference>
<sequence>MRHYEVVFLVHPDQSEQLSAMMDRYRQIIETDGGCIHRLEDWGRRQLAYPIQKLYKAHYVLMNIECTPRTIEELTSAFRFNDAVLRDMVIRREEAITETSPLAKGEESGGRGYDSARSGRDRDESGGRGYDGARPGRDEDESKENTDRDEQSEDSE</sequence>
<comment type="function">
    <text evidence="1">Binds together with bS18 to 16S ribosomal RNA.</text>
</comment>
<comment type="similarity">
    <text evidence="1">Belongs to the bacterial ribosomal protein bS6 family.</text>
</comment>
<protein>
    <recommendedName>
        <fullName evidence="1">Small ribosomal subunit protein bS6</fullName>
    </recommendedName>
    <alternativeName>
        <fullName evidence="3">30S ribosomal protein S6</fullName>
    </alternativeName>
</protein>